<organism>
    <name type="scientific">Mycobacterium bovis (strain BCG / Pasteur 1173P2)</name>
    <dbReference type="NCBI Taxonomy" id="410289"/>
    <lineage>
        <taxon>Bacteria</taxon>
        <taxon>Bacillati</taxon>
        <taxon>Actinomycetota</taxon>
        <taxon>Actinomycetes</taxon>
        <taxon>Mycobacteriales</taxon>
        <taxon>Mycobacteriaceae</taxon>
        <taxon>Mycobacterium</taxon>
        <taxon>Mycobacterium tuberculosis complex</taxon>
    </lineage>
</organism>
<dbReference type="EC" id="2.7.7.6" evidence="1"/>
<dbReference type="EMBL" id="AM408590">
    <property type="protein sequence ID" value="CAL73511.1"/>
    <property type="molecule type" value="Genomic_DNA"/>
</dbReference>
<dbReference type="RefSeq" id="WP_003418351.1">
    <property type="nucleotide sequence ID" value="NC_008769.1"/>
</dbReference>
<dbReference type="SMR" id="A1KPE3"/>
<dbReference type="KEGG" id="mbb:BCG_3522c"/>
<dbReference type="HOGENOM" id="CLU_053084_0_1_11"/>
<dbReference type="Proteomes" id="UP000001472">
    <property type="component" value="Chromosome"/>
</dbReference>
<dbReference type="GO" id="GO:0005737">
    <property type="term" value="C:cytoplasm"/>
    <property type="evidence" value="ECO:0007669"/>
    <property type="project" value="UniProtKB-ARBA"/>
</dbReference>
<dbReference type="GO" id="GO:0000428">
    <property type="term" value="C:DNA-directed RNA polymerase complex"/>
    <property type="evidence" value="ECO:0007669"/>
    <property type="project" value="UniProtKB-KW"/>
</dbReference>
<dbReference type="GO" id="GO:0003677">
    <property type="term" value="F:DNA binding"/>
    <property type="evidence" value="ECO:0007669"/>
    <property type="project" value="UniProtKB-UniRule"/>
</dbReference>
<dbReference type="GO" id="GO:0003899">
    <property type="term" value="F:DNA-directed RNA polymerase activity"/>
    <property type="evidence" value="ECO:0007669"/>
    <property type="project" value="UniProtKB-UniRule"/>
</dbReference>
<dbReference type="GO" id="GO:0046983">
    <property type="term" value="F:protein dimerization activity"/>
    <property type="evidence" value="ECO:0007669"/>
    <property type="project" value="InterPro"/>
</dbReference>
<dbReference type="GO" id="GO:0006351">
    <property type="term" value="P:DNA-templated transcription"/>
    <property type="evidence" value="ECO:0007669"/>
    <property type="project" value="UniProtKB-UniRule"/>
</dbReference>
<dbReference type="CDD" id="cd06928">
    <property type="entry name" value="RNAP_alpha_NTD"/>
    <property type="match status" value="1"/>
</dbReference>
<dbReference type="FunFam" id="1.10.150.20:FF:000001">
    <property type="entry name" value="DNA-directed RNA polymerase subunit alpha"/>
    <property type="match status" value="1"/>
</dbReference>
<dbReference type="FunFam" id="2.170.120.12:FF:000001">
    <property type="entry name" value="DNA-directed RNA polymerase subunit alpha"/>
    <property type="match status" value="1"/>
</dbReference>
<dbReference type="Gene3D" id="1.10.150.20">
    <property type="entry name" value="5' to 3' exonuclease, C-terminal subdomain"/>
    <property type="match status" value="1"/>
</dbReference>
<dbReference type="Gene3D" id="2.170.120.12">
    <property type="entry name" value="DNA-directed RNA polymerase, insert domain"/>
    <property type="match status" value="1"/>
</dbReference>
<dbReference type="Gene3D" id="3.30.1360.10">
    <property type="entry name" value="RNA polymerase, RBP11-like subunit"/>
    <property type="match status" value="1"/>
</dbReference>
<dbReference type="HAMAP" id="MF_00059">
    <property type="entry name" value="RNApol_bact_RpoA"/>
    <property type="match status" value="1"/>
</dbReference>
<dbReference type="InterPro" id="IPR011262">
    <property type="entry name" value="DNA-dir_RNA_pol_insert"/>
</dbReference>
<dbReference type="InterPro" id="IPR011263">
    <property type="entry name" value="DNA-dir_RNA_pol_RpoA/D/Rpb3"/>
</dbReference>
<dbReference type="InterPro" id="IPR011773">
    <property type="entry name" value="DNA-dir_RpoA"/>
</dbReference>
<dbReference type="InterPro" id="IPR036603">
    <property type="entry name" value="RBP11-like"/>
</dbReference>
<dbReference type="InterPro" id="IPR011260">
    <property type="entry name" value="RNAP_asu_C"/>
</dbReference>
<dbReference type="InterPro" id="IPR036643">
    <property type="entry name" value="RNApol_insert_sf"/>
</dbReference>
<dbReference type="NCBIfam" id="NF003513">
    <property type="entry name" value="PRK05182.1-2"/>
    <property type="match status" value="1"/>
</dbReference>
<dbReference type="NCBIfam" id="NF003514">
    <property type="entry name" value="PRK05182.1-4"/>
    <property type="match status" value="1"/>
</dbReference>
<dbReference type="NCBIfam" id="NF003519">
    <property type="entry name" value="PRK05182.2-5"/>
    <property type="match status" value="1"/>
</dbReference>
<dbReference type="NCBIfam" id="TIGR02027">
    <property type="entry name" value="rpoA"/>
    <property type="match status" value="1"/>
</dbReference>
<dbReference type="Pfam" id="PF01000">
    <property type="entry name" value="RNA_pol_A_bac"/>
    <property type="match status" value="1"/>
</dbReference>
<dbReference type="Pfam" id="PF03118">
    <property type="entry name" value="RNA_pol_A_CTD"/>
    <property type="match status" value="1"/>
</dbReference>
<dbReference type="Pfam" id="PF01193">
    <property type="entry name" value="RNA_pol_L"/>
    <property type="match status" value="1"/>
</dbReference>
<dbReference type="SMART" id="SM00662">
    <property type="entry name" value="RPOLD"/>
    <property type="match status" value="1"/>
</dbReference>
<dbReference type="SUPFAM" id="SSF47789">
    <property type="entry name" value="C-terminal domain of RNA polymerase alpha subunit"/>
    <property type="match status" value="1"/>
</dbReference>
<dbReference type="SUPFAM" id="SSF56553">
    <property type="entry name" value="Insert subdomain of RNA polymerase alpha subunit"/>
    <property type="match status" value="1"/>
</dbReference>
<dbReference type="SUPFAM" id="SSF55257">
    <property type="entry name" value="RBP11-like subunits of RNA polymerase"/>
    <property type="match status" value="1"/>
</dbReference>
<proteinExistence type="inferred from homology"/>
<gene>
    <name evidence="1" type="primary">rpoA</name>
    <name type="ordered locus">BCG_3522c</name>
</gene>
<feature type="chain" id="PRO_0000296834" description="DNA-directed RNA polymerase subunit alpha">
    <location>
        <begin position="1"/>
        <end position="347"/>
    </location>
</feature>
<feature type="region of interest" description="Alpha N-terminal domain (alpha-NTD)" evidence="1">
    <location>
        <begin position="1"/>
        <end position="226"/>
    </location>
</feature>
<feature type="region of interest" description="Alpha C-terminal domain (alpha-CTD)" evidence="1">
    <location>
        <begin position="241"/>
        <end position="347"/>
    </location>
</feature>
<sequence length="347" mass="37706">MLISQRPTLSEDVLTDNRSQFVIEPLEPGFGYTLGNSLRRTLLSSIPGAAVTSIRIDGVLHEFTTVPGVKEDVTEIILNLKSLVVSSEEDEPVTMYLRKQGPGEVTAGDIVPPAGVTVHNPGMHIATLNDKGKLEVELVVERGRGYVPAVQNRASGAEIGRIPVDSIYSPVLKVTYKVDATRVEQRTDFDKLILDVETKNSISPRDALASAGKTLVELFGLARELNVEAEGIEIGPSPAEADHIASFALPIDDLDLTVRSYNCLKREGVHTVGELVARTESDLLDIRNFGQKSIDEVKIKLHQLGLSLKDSPPSFDPSEVAGYDVATGTWSTEGAYDEQDYAETEQL</sequence>
<name>RPOA_MYCBP</name>
<comment type="function">
    <text evidence="1">DNA-dependent RNA polymerase catalyzes the transcription of DNA into RNA using the four ribonucleoside triphosphates as substrates.</text>
</comment>
<comment type="catalytic activity">
    <reaction evidence="1">
        <text>RNA(n) + a ribonucleoside 5'-triphosphate = RNA(n+1) + diphosphate</text>
        <dbReference type="Rhea" id="RHEA:21248"/>
        <dbReference type="Rhea" id="RHEA-COMP:14527"/>
        <dbReference type="Rhea" id="RHEA-COMP:17342"/>
        <dbReference type="ChEBI" id="CHEBI:33019"/>
        <dbReference type="ChEBI" id="CHEBI:61557"/>
        <dbReference type="ChEBI" id="CHEBI:140395"/>
        <dbReference type="EC" id="2.7.7.6"/>
    </reaction>
</comment>
<comment type="subunit">
    <text evidence="1">Homodimer. The RNAP catalytic core consists of 2 alpha, 1 beta, 1 beta' and 1 omega subunit. When a sigma factor is associated with the core the holoenzyme is formed, which can initiate transcription.</text>
</comment>
<comment type="domain">
    <text evidence="1">The N-terminal domain is essential for RNAP assembly and basal transcription, whereas the C-terminal domain is involved in interaction with transcriptional regulators and with upstream promoter elements.</text>
</comment>
<comment type="similarity">
    <text evidence="1">Belongs to the RNA polymerase alpha chain family.</text>
</comment>
<accession>A1KPE3</accession>
<keyword id="KW-0240">DNA-directed RNA polymerase</keyword>
<keyword id="KW-0548">Nucleotidyltransferase</keyword>
<keyword id="KW-0804">Transcription</keyword>
<keyword id="KW-0808">Transferase</keyword>
<reference key="1">
    <citation type="journal article" date="2007" name="Proc. Natl. Acad. Sci. U.S.A.">
        <title>Genome plasticity of BCG and impact on vaccine efficacy.</title>
        <authorList>
            <person name="Brosch R."/>
            <person name="Gordon S.V."/>
            <person name="Garnier T."/>
            <person name="Eiglmeier K."/>
            <person name="Frigui W."/>
            <person name="Valenti P."/>
            <person name="Dos Santos S."/>
            <person name="Duthoy S."/>
            <person name="Lacroix C."/>
            <person name="Garcia-Pelayo C."/>
            <person name="Inwald J.K."/>
            <person name="Golby P."/>
            <person name="Garcia J.N."/>
            <person name="Hewinson R.G."/>
            <person name="Behr M.A."/>
            <person name="Quail M.A."/>
            <person name="Churcher C."/>
            <person name="Barrell B.G."/>
            <person name="Parkhill J."/>
            <person name="Cole S.T."/>
        </authorList>
    </citation>
    <scope>NUCLEOTIDE SEQUENCE [LARGE SCALE GENOMIC DNA]</scope>
    <source>
        <strain>BCG / Pasteur 1173P2</strain>
    </source>
</reference>
<protein>
    <recommendedName>
        <fullName evidence="1">DNA-directed RNA polymerase subunit alpha</fullName>
        <shortName evidence="1">RNAP subunit alpha</shortName>
        <ecNumber evidence="1">2.7.7.6</ecNumber>
    </recommendedName>
    <alternativeName>
        <fullName evidence="1">RNA polymerase subunit alpha</fullName>
    </alternativeName>
    <alternativeName>
        <fullName evidence="1">Transcriptase subunit alpha</fullName>
    </alternativeName>
</protein>
<evidence type="ECO:0000255" key="1">
    <source>
        <dbReference type="HAMAP-Rule" id="MF_00059"/>
    </source>
</evidence>